<accession>B0R633</accession>
<accession>P25964</accession>
<accession>Q9HPF5</accession>
<comment type="function">
    <text evidence="2 3 4">Involved in the control of phototaxis. Mediates both photoattractant (in the orange light) and photophobic (in the near UV light) responses. The signal is then transmitted to the sensory rhodopsin I transducer (HTR-I).</text>
</comment>
<comment type="subunit">
    <text evidence="4">Interacts with HTR-I.</text>
</comment>
<comment type="subcellular location">
    <subcellularLocation>
        <location evidence="4">Cell membrane</location>
        <topology evidence="4">Multi-pass membrane protein</topology>
    </subcellularLocation>
</comment>
<comment type="similarity">
    <text evidence="5">Belongs to the archaeal/bacterial/fungal opsin family.</text>
</comment>
<dbReference type="EMBL" id="X51682">
    <property type="protein sequence ID" value="CAA35984.1"/>
    <property type="molecule type" value="Genomic_DNA"/>
</dbReference>
<dbReference type="EMBL" id="AM774415">
    <property type="protein sequence ID" value="CAP14202.1"/>
    <property type="molecule type" value="Genomic_DNA"/>
</dbReference>
<dbReference type="PIR" id="S09277">
    <property type="entry name" value="S09277"/>
</dbReference>
<dbReference type="SMR" id="B0R633"/>
<dbReference type="EnsemblBacteria" id="CAP14202">
    <property type="protein sequence ID" value="CAP14202"/>
    <property type="gene ID" value="OE_3348F"/>
</dbReference>
<dbReference type="KEGG" id="hsl:OE_3348F"/>
<dbReference type="HOGENOM" id="CLU_054785_5_1_2"/>
<dbReference type="PhylomeDB" id="B0R633"/>
<dbReference type="Proteomes" id="UP000001321">
    <property type="component" value="Chromosome"/>
</dbReference>
<dbReference type="GO" id="GO:0005886">
    <property type="term" value="C:plasma membrane"/>
    <property type="evidence" value="ECO:0007669"/>
    <property type="project" value="UniProtKB-SubCell"/>
</dbReference>
<dbReference type="GO" id="GO:0005216">
    <property type="term" value="F:monoatomic ion channel activity"/>
    <property type="evidence" value="ECO:0007669"/>
    <property type="project" value="InterPro"/>
</dbReference>
<dbReference type="GO" id="GO:0009881">
    <property type="term" value="F:photoreceptor activity"/>
    <property type="evidence" value="ECO:0007669"/>
    <property type="project" value="UniProtKB-KW"/>
</dbReference>
<dbReference type="GO" id="GO:0007602">
    <property type="term" value="P:phototransduction"/>
    <property type="evidence" value="ECO:0007669"/>
    <property type="project" value="UniProtKB-KW"/>
</dbReference>
<dbReference type="CDD" id="cd15029">
    <property type="entry name" value="7tm_SRI_SRII"/>
    <property type="match status" value="1"/>
</dbReference>
<dbReference type="Gene3D" id="1.20.1070.10">
    <property type="entry name" value="Rhodopsin 7-helix transmembrane proteins"/>
    <property type="match status" value="1"/>
</dbReference>
<dbReference type="InterPro" id="IPR001425">
    <property type="entry name" value="Arc/bac/fun_rhodopsins"/>
</dbReference>
<dbReference type="InterPro" id="IPR018229">
    <property type="entry name" value="Rhodopsin_retinal_BS"/>
</dbReference>
<dbReference type="PANTHER" id="PTHR28286">
    <property type="match status" value="1"/>
</dbReference>
<dbReference type="PANTHER" id="PTHR28286:SF2">
    <property type="entry name" value="BACTERIORHODOPSIN _OPSIN, NOPA (EUROFUNG)"/>
    <property type="match status" value="1"/>
</dbReference>
<dbReference type="Pfam" id="PF01036">
    <property type="entry name" value="Bac_rhodopsin"/>
    <property type="match status" value="1"/>
</dbReference>
<dbReference type="PRINTS" id="PR00251">
    <property type="entry name" value="BACTRLOPSIN"/>
</dbReference>
<dbReference type="SMART" id="SM01021">
    <property type="entry name" value="Bac_rhodopsin"/>
    <property type="match status" value="1"/>
</dbReference>
<dbReference type="SUPFAM" id="SSF81321">
    <property type="entry name" value="Family A G protein-coupled receptor-like"/>
    <property type="match status" value="1"/>
</dbReference>
<dbReference type="PROSITE" id="PS00950">
    <property type="entry name" value="BACTERIAL_OPSIN_1"/>
    <property type="match status" value="1"/>
</dbReference>
<dbReference type="PROSITE" id="PS00327">
    <property type="entry name" value="BACTERIAL_OPSIN_RET"/>
    <property type="match status" value="1"/>
</dbReference>
<gene>
    <name type="primary">sopI</name>
    <name type="ordered locus">OE_3348F</name>
</gene>
<sequence length="239" mass="25501">MDAVATAYLGGAVALIVGVAFVWLLYRSLDGSPHQSALAPLAIIPVFAGLSYVGMAYDIGTVIVNGNQIVGLRYIDWLVTTPILVGYVGYAAGASRRSIIGVMVADALMIAVGAGAVVTDGTLKWALFGVSSIFHLSLFAYLYVIFPRVVPDVPEQIGLFNLLKNHIGLLWLAYPLVWLFGPAGIGEATAAGVALTYVFLDVLAKVPYVYFFYARRRVFMHSESPPAPEQATVEATAAD</sequence>
<organism>
    <name type="scientific">Halobacterium salinarum (strain ATCC 29341 / DSM 671 / R1)</name>
    <dbReference type="NCBI Taxonomy" id="478009"/>
    <lineage>
        <taxon>Archaea</taxon>
        <taxon>Methanobacteriati</taxon>
        <taxon>Methanobacteriota</taxon>
        <taxon>Stenosarchaea group</taxon>
        <taxon>Halobacteria</taxon>
        <taxon>Halobacteriales</taxon>
        <taxon>Halobacteriaceae</taxon>
        <taxon>Halobacterium</taxon>
        <taxon>Halobacterium salinarum NRC-34001</taxon>
    </lineage>
</organism>
<evidence type="ECO:0000250" key="1"/>
<evidence type="ECO:0000269" key="2">
    <source>
    </source>
</evidence>
<evidence type="ECO:0000269" key="3">
    <source>
    </source>
</evidence>
<evidence type="ECO:0000269" key="4">
    <source>
    </source>
</evidence>
<evidence type="ECO:0000305" key="5"/>
<protein>
    <recommendedName>
        <fullName>Sensory rhodopsin-1</fullName>
    </recommendedName>
    <alternativeName>
        <fullName>Sensory rhodopsin I</fullName>
        <shortName>SR-I</shortName>
    </alternativeName>
</protein>
<keyword id="KW-1003">Cell membrane</keyword>
<keyword id="KW-0157">Chromophore</keyword>
<keyword id="KW-0903">Direct protein sequencing</keyword>
<keyword id="KW-0472">Membrane</keyword>
<keyword id="KW-0600">Photoreceptor protein</keyword>
<keyword id="KW-0675">Receptor</keyword>
<keyword id="KW-0681">Retinal protein</keyword>
<keyword id="KW-0716">Sensory transduction</keyword>
<keyword id="KW-0812">Transmembrane</keyword>
<keyword id="KW-1133">Transmembrane helix</keyword>
<name>BACS1_HALS3</name>
<reference key="1">
    <citation type="journal article" date="1989" name="EMBO J.">
        <title>Primary structure of sensory rhodopsin I, a prokaryotic photoreceptor.</title>
        <authorList>
            <person name="Blanck A."/>
            <person name="Oesterhelt D."/>
            <person name="Ferrando E."/>
            <person name="Schegk E.S."/>
            <person name="Lottspeich F."/>
        </authorList>
    </citation>
    <scope>NUCLEOTIDE SEQUENCE [GENOMIC DNA]</scope>
    <scope>PARTIAL PROTEIN SEQUENCE</scope>
    <source>
        <strain>R1 / S9 / L33</strain>
    </source>
</reference>
<reference key="2">
    <citation type="journal article" date="2008" name="Genomics">
        <title>Evolution in the laboratory: the genome of Halobacterium salinarum strain R1 compared to that of strain NRC-1.</title>
        <authorList>
            <person name="Pfeiffer F."/>
            <person name="Schuster S.C."/>
            <person name="Broicher A."/>
            <person name="Falb M."/>
            <person name="Palm P."/>
            <person name="Rodewald K."/>
            <person name="Ruepp A."/>
            <person name="Soppa J."/>
            <person name="Tittor J."/>
            <person name="Oesterhelt D."/>
        </authorList>
    </citation>
    <scope>NUCLEOTIDE SEQUENCE [LARGE SCALE GENOMIC DNA]</scope>
    <source>
        <strain>ATCC 29341 / DSM 671 / R1</strain>
    </source>
</reference>
<reference key="3">
    <citation type="journal article" date="1990" name="J. Mol. Biol.">
        <title>Quantitation of photochromism of sensory rhodopsin-I by computerized tracking of Halobacterium halobium cells.</title>
        <authorList>
            <person name="Marwan W."/>
            <person name="Oesterhelt D."/>
        </authorList>
    </citation>
    <scope>FUNCTION</scope>
    <source>
        <strain>M407</strain>
    </source>
</reference>
<reference key="4">
    <citation type="journal article" date="1994" name="EMBO J.">
        <title>Phototaxis of Halobacterium salinarium requires a signalling complex of sensory rhodopsin I and its methyl-accepting transducer HtrI.</title>
        <authorList>
            <person name="Krah M."/>
            <person name="Marwan W."/>
            <person name="Vermeglio A."/>
            <person name="Oesterhelt D."/>
        </authorList>
    </citation>
    <scope>FUNCTION</scope>
    <scope>INTERACTION WITH HTR-I</scope>
    <scope>SUBCELLULAR LOCATION</scope>
    <source>
        <strain>R1 / S9 / L33</strain>
    </source>
</reference>
<reference key="5">
    <citation type="journal article" date="1995" name="J. Mol. Biol.">
        <title>Mechanism of photosensory adaptation in Halobacterium salinarium.</title>
        <authorList>
            <person name="Marwan W."/>
            <person name="Bibikov S.I."/>
            <person name="Montrone M."/>
            <person name="Oesterhelt D."/>
        </authorList>
    </citation>
    <scope>FUNCTION</scope>
    <source>
        <strain>R1 / S9 / L33 / M417</strain>
    </source>
</reference>
<proteinExistence type="evidence at protein level"/>
<feature type="chain" id="PRO_0000428960" description="Sensory rhodopsin-1">
    <location>
        <begin position="1"/>
        <end position="239"/>
    </location>
</feature>
<feature type="topological domain" description="Extracellular" evidence="1">
    <location>
        <begin position="1"/>
        <end position="3"/>
    </location>
</feature>
<feature type="transmembrane region" description="Helical; Name=Helix A" evidence="1">
    <location>
        <begin position="4"/>
        <end position="25"/>
    </location>
</feature>
<feature type="topological domain" description="Cytoplasmic" evidence="1">
    <location>
        <begin position="26"/>
        <end position="34"/>
    </location>
</feature>
<feature type="transmembrane region" description="Helical; Name=Helix B" evidence="1">
    <location>
        <begin position="35"/>
        <end position="56"/>
    </location>
</feature>
<feature type="topological domain" description="Extracellular" evidence="1">
    <location>
        <begin position="57"/>
        <end position="70"/>
    </location>
</feature>
<feature type="transmembrane region" description="Helical; Name=Helix C" evidence="1">
    <location>
        <begin position="71"/>
        <end position="92"/>
    </location>
</feature>
<feature type="topological domain" description="Cytoplasmic" evidence="1">
    <location>
        <begin position="93"/>
        <end position="95"/>
    </location>
</feature>
<feature type="transmembrane region" description="Helical; Name=Helix D" evidence="1">
    <location>
        <begin position="96"/>
        <end position="118"/>
    </location>
</feature>
<feature type="topological domain" description="Extracellular" evidence="1">
    <location>
        <begin position="119"/>
        <end position="122"/>
    </location>
</feature>
<feature type="transmembrane region" description="Helical; Name=Helix E" evidence="1">
    <location>
        <begin position="123"/>
        <end position="150"/>
    </location>
</feature>
<feature type="topological domain" description="Cytoplasmic" evidence="1">
    <location>
        <begin position="151"/>
        <end position="153"/>
    </location>
</feature>
<feature type="transmembrane region" description="Helical; Name=Helix F" evidence="1">
    <location>
        <begin position="154"/>
        <end position="181"/>
    </location>
</feature>
<feature type="topological domain" description="Extracellular" evidence="1">
    <location>
        <begin position="182"/>
        <end position="189"/>
    </location>
</feature>
<feature type="transmembrane region" description="Helical; Name=Helix G" evidence="1">
    <location>
        <begin position="190"/>
        <end position="222"/>
    </location>
</feature>
<feature type="topological domain" description="Cytoplasmic" evidence="1">
    <location>
        <begin position="223"/>
        <end position="239"/>
    </location>
</feature>
<feature type="modified residue" description="N6-(retinylidene)lysine" evidence="1">
    <location>
        <position position="205"/>
    </location>
</feature>